<gene>
    <name type="primary">F</name>
</gene>
<proteinExistence type="evidence at protein level"/>
<evidence type="ECO:0000250" key="1">
    <source>
        <dbReference type="UniProtKB" id="P03420"/>
    </source>
</evidence>
<evidence type="ECO:0000250" key="2">
    <source>
        <dbReference type="UniProtKB" id="P11209"/>
    </source>
</evidence>
<evidence type="ECO:0000255" key="3"/>
<evidence type="ECO:0000305" key="4"/>
<evidence type="ECO:0007829" key="5">
    <source>
        <dbReference type="PDB" id="5TDL"/>
    </source>
</evidence>
<sequence length="574" mass="63822">MAATAMRMIISIIFISTYMTHITLCQNITEEFYQSTCSAVSRGYLSALRTGWYTSVVTIELSKIQKNVCKSTDSKVKLIKQELERYNNAVIELQSLMQNEPASFSRAKRGIPELIHYTRNSTKRFYGLMGKKRKRRFLGFLLGIGSAIASGVAVSKVLHLEGEVNKIKNALLSTNKAVVSLSNGVSVLTSKVLDLKNYIDKELLPKVNNHDCRISNIETVIEFQQKNNRLLEIAREFSVNAGITTPLSTYMLTNSELLSLINDMPITNDQKKLMSSNVQIVRQQSYSIMSVVKEEVIAYVVQLPIYGVIDTPCWKLHTSPLCTTDNKEGSNICLTRTDRGWYCDNAGSVSFFPQAETCKVQSNRVFCDTMNSLTLPTDVNLCNTDIFNTKYDCKIMTSKTDISSSVITSIGAIVSCYGKTKCTASNKNRGIIKTFSNGCDYVSNKGVDTVSVGNTLYYVNKLEGKALYIKGEPIINYYDPLVFPSDEFDASIAQVNAKINQSLAFIRRSDELLHSVDVGKSTTNVVITTIIIVIVVVILMLIAVGLLFYCKTRSTPIMLGKDQLSGINNLSFSK</sequence>
<feature type="signal peptide" evidence="3">
    <location>
        <begin position="1"/>
        <end position="25"/>
    </location>
</feature>
<feature type="chain" id="PRO_0000039228" description="Fusion glycoprotein F0">
    <location>
        <begin position="26"/>
        <end position="574"/>
    </location>
</feature>
<feature type="chain" id="PRO_0000039229" description="Fusion glycoprotein F2">
    <location>
        <begin position="26"/>
        <end position="109"/>
    </location>
</feature>
<feature type="peptide" id="PRO_0000432660" description="p27" evidence="1">
    <location>
        <begin position="110"/>
        <end position="136"/>
    </location>
</feature>
<feature type="chain" id="PRO_0000039230" description="Fusion glycoprotein F1">
    <location>
        <begin position="137"/>
        <end position="574"/>
    </location>
</feature>
<feature type="topological domain" description="Extracellular" evidence="1">
    <location>
        <begin position="26"/>
        <end position="524"/>
    </location>
</feature>
<feature type="transmembrane region" description="Helical" evidence="1">
    <location>
        <begin position="525"/>
        <end position="550"/>
    </location>
</feature>
<feature type="topological domain" description="Cytoplasmic" evidence="1">
    <location>
        <begin position="551"/>
        <end position="574"/>
    </location>
</feature>
<feature type="region of interest" description="Fusion peptide" evidence="2">
    <location>
        <begin position="137"/>
        <end position="157"/>
    </location>
</feature>
<feature type="coiled-coil region" evidence="2">
    <location>
        <begin position="76"/>
        <end position="96"/>
    </location>
</feature>
<feature type="coiled-coil region" evidence="2">
    <location>
        <begin position="158"/>
        <end position="209"/>
    </location>
</feature>
<feature type="coiled-coil region" evidence="2">
    <location>
        <begin position="481"/>
        <end position="516"/>
    </location>
</feature>
<feature type="site" description="Cleavage; by host furin-like protease" evidence="1">
    <location>
        <begin position="109"/>
        <end position="110"/>
    </location>
</feature>
<feature type="site" description="Cleavage; by host furin-like protease" evidence="1">
    <location>
        <begin position="136"/>
        <end position="137"/>
    </location>
</feature>
<feature type="lipid moiety-binding region" description="S-palmitoyl cysteine; by host" evidence="1">
    <location>
        <position position="550"/>
    </location>
</feature>
<feature type="glycosylation site" description="N-linked (GlcNAc...) asparagine; by host" evidence="1">
    <location>
        <position position="27"/>
    </location>
</feature>
<feature type="glycosylation site" description="N-linked (GlcNAc...) asparagine; by host" evidence="3">
    <location>
        <position position="120"/>
    </location>
</feature>
<feature type="glycosylation site" description="N-linked (GlcNAc...) asparagine; by host" evidence="1">
    <location>
        <position position="500"/>
    </location>
</feature>
<feature type="disulfide bond" description="Interchain (between F2 and F1 chains)" evidence="1">
    <location>
        <begin position="37"/>
        <end position="439"/>
    </location>
</feature>
<feature type="disulfide bond" description="Interchain (between F2 and F1 chains)" evidence="1">
    <location>
        <begin position="69"/>
        <end position="212"/>
    </location>
</feature>
<feature type="disulfide bond" evidence="1">
    <location>
        <begin position="313"/>
        <end position="343"/>
    </location>
</feature>
<feature type="disulfide bond" evidence="1">
    <location>
        <begin position="322"/>
        <end position="333"/>
    </location>
</feature>
<feature type="disulfide bond" evidence="1">
    <location>
        <begin position="358"/>
        <end position="367"/>
    </location>
</feature>
<feature type="disulfide bond" evidence="1">
    <location>
        <begin position="382"/>
        <end position="393"/>
    </location>
</feature>
<feature type="disulfide bond" evidence="1">
    <location>
        <begin position="416"/>
        <end position="422"/>
    </location>
</feature>
<feature type="strand" evidence="5">
    <location>
        <begin position="29"/>
        <end position="33"/>
    </location>
</feature>
<feature type="turn" evidence="5">
    <location>
        <begin position="34"/>
        <end position="37"/>
    </location>
</feature>
<feature type="strand" evidence="5">
    <location>
        <begin position="38"/>
        <end position="60"/>
    </location>
</feature>
<feature type="helix" evidence="5">
    <location>
        <begin position="74"/>
        <end position="95"/>
    </location>
</feature>
<feature type="helix" evidence="5">
    <location>
        <begin position="96"/>
        <end position="98"/>
    </location>
</feature>
<feature type="strand" evidence="5">
    <location>
        <begin position="99"/>
        <end position="102"/>
    </location>
</feature>
<feature type="turn" evidence="5">
    <location>
        <begin position="146"/>
        <end position="148"/>
    </location>
</feature>
<feature type="helix" evidence="5">
    <location>
        <begin position="149"/>
        <end position="157"/>
    </location>
</feature>
<feature type="helix" evidence="5">
    <location>
        <begin position="163"/>
        <end position="168"/>
    </location>
</feature>
<feature type="helix" evidence="5">
    <location>
        <begin position="169"/>
        <end position="171"/>
    </location>
</feature>
<feature type="turn" evidence="5">
    <location>
        <begin position="172"/>
        <end position="174"/>
    </location>
</feature>
<feature type="strand" evidence="5">
    <location>
        <begin position="175"/>
        <end position="179"/>
    </location>
</feature>
<feature type="strand" evidence="5">
    <location>
        <begin position="187"/>
        <end position="194"/>
    </location>
</feature>
<feature type="helix" evidence="5">
    <location>
        <begin position="196"/>
        <end position="199"/>
    </location>
</feature>
<feature type="turn" evidence="5">
    <location>
        <begin position="200"/>
        <end position="203"/>
    </location>
</feature>
<feature type="helix" evidence="5">
    <location>
        <begin position="204"/>
        <end position="208"/>
    </location>
</feature>
<feature type="turn" evidence="5">
    <location>
        <begin position="209"/>
        <end position="211"/>
    </location>
</feature>
<feature type="helix" evidence="5">
    <location>
        <begin position="218"/>
        <end position="237"/>
    </location>
</feature>
<feature type="turn" evidence="5">
    <location>
        <begin position="238"/>
        <end position="242"/>
    </location>
</feature>
<feature type="strand" evidence="5">
    <location>
        <begin position="243"/>
        <end position="246"/>
    </location>
</feature>
<feature type="turn" evidence="5">
    <location>
        <begin position="249"/>
        <end position="251"/>
    </location>
</feature>
<feature type="helix" evidence="5">
    <location>
        <begin position="254"/>
        <end position="261"/>
    </location>
</feature>
<feature type="strand" evidence="5">
    <location>
        <begin position="264"/>
        <end position="266"/>
    </location>
</feature>
<feature type="helix" evidence="5">
    <location>
        <begin position="268"/>
        <end position="276"/>
    </location>
</feature>
<feature type="helix" evidence="5">
    <location>
        <begin position="278"/>
        <end position="283"/>
    </location>
</feature>
<feature type="strand" evidence="5">
    <location>
        <begin position="287"/>
        <end position="293"/>
    </location>
</feature>
<feature type="strand" evidence="5">
    <location>
        <begin position="296"/>
        <end position="318"/>
    </location>
</feature>
<feature type="strand" evidence="5">
    <location>
        <begin position="325"/>
        <end position="327"/>
    </location>
</feature>
<feature type="helix" evidence="5">
    <location>
        <begin position="328"/>
        <end position="330"/>
    </location>
</feature>
<feature type="strand" evidence="5">
    <location>
        <begin position="333"/>
        <end position="336"/>
    </location>
</feature>
<feature type="strand" evidence="5">
    <location>
        <begin position="340"/>
        <end position="345"/>
    </location>
</feature>
<feature type="strand" evidence="5">
    <location>
        <begin position="348"/>
        <end position="354"/>
    </location>
</feature>
<feature type="helix" evidence="5">
    <location>
        <begin position="355"/>
        <end position="357"/>
    </location>
</feature>
<feature type="strand" evidence="5">
    <location>
        <begin position="359"/>
        <end position="361"/>
    </location>
</feature>
<feature type="strand" evidence="5">
    <location>
        <begin position="364"/>
        <end position="368"/>
    </location>
</feature>
<feature type="helix" evidence="5">
    <location>
        <begin position="369"/>
        <end position="371"/>
    </location>
</feature>
<feature type="strand" evidence="5">
    <location>
        <begin position="373"/>
        <end position="375"/>
    </location>
</feature>
<feature type="helix" evidence="5">
    <location>
        <begin position="377"/>
        <end position="383"/>
    </location>
</feature>
<feature type="strand" evidence="5">
    <location>
        <begin position="389"/>
        <end position="391"/>
    </location>
</feature>
<feature type="strand" evidence="5">
    <location>
        <begin position="394"/>
        <end position="398"/>
    </location>
</feature>
<feature type="strand" evidence="5">
    <location>
        <begin position="404"/>
        <end position="407"/>
    </location>
</feature>
<feature type="strand" evidence="5">
    <location>
        <begin position="409"/>
        <end position="416"/>
    </location>
</feature>
<feature type="strand" evidence="5">
    <location>
        <begin position="422"/>
        <end position="426"/>
    </location>
</feature>
<feature type="turn" evidence="5">
    <location>
        <begin position="427"/>
        <end position="429"/>
    </location>
</feature>
<feature type="strand" evidence="5">
    <location>
        <begin position="430"/>
        <end position="434"/>
    </location>
</feature>
<feature type="strand" evidence="5">
    <location>
        <begin position="437"/>
        <end position="443"/>
    </location>
</feature>
<feature type="strand" evidence="5">
    <location>
        <begin position="449"/>
        <end position="452"/>
    </location>
</feature>
<feature type="strand" evidence="5">
    <location>
        <begin position="455"/>
        <end position="458"/>
    </location>
</feature>
<feature type="strand" evidence="5">
    <location>
        <begin position="465"/>
        <end position="469"/>
    </location>
</feature>
<feature type="turn" evidence="5">
    <location>
        <begin position="474"/>
        <end position="477"/>
    </location>
</feature>
<feature type="strand" evidence="5">
    <location>
        <begin position="485"/>
        <end position="491"/>
    </location>
</feature>
<feature type="helix" evidence="5">
    <location>
        <begin position="492"/>
        <end position="507"/>
    </location>
</feature>
<feature type="turn" evidence="5">
    <location>
        <begin position="508"/>
        <end position="511"/>
    </location>
</feature>
<reference key="1">
    <citation type="journal article" date="1991" name="Virology">
        <title>Nucleotide sequence analysis of the bovine respiratory syncytial virus fusion protein mRNA and expression from a recombinant vaccinia virus.</title>
        <authorList>
            <person name="Lerch R.A."/>
            <person name="Anderson K."/>
            <person name="Amann V.L."/>
            <person name="Wertz G.W."/>
        </authorList>
    </citation>
    <scope>NUCLEOTIDE SEQUENCE [MRNA]</scope>
</reference>
<protein>
    <recommendedName>
        <fullName>Fusion glycoprotein F0</fullName>
    </recommendedName>
    <component>
        <recommendedName>
            <fullName evidence="1">Fusion glycoprotein F2</fullName>
            <shortName>F2</shortName>
        </recommendedName>
    </component>
    <component>
        <recommendedName>
            <fullName evidence="1">p27</fullName>
        </recommendedName>
        <alternativeName>
            <fullName>Intervening segment</fullName>
        </alternativeName>
        <alternativeName>
            <fullName>Pep27</fullName>
        </alternativeName>
        <alternativeName>
            <fullName>Peptide 27</fullName>
        </alternativeName>
    </component>
    <component>
        <recommendedName>
            <fullName evidence="1">Fusion glycoprotein F1</fullName>
            <shortName>F1</shortName>
        </recommendedName>
    </component>
</protein>
<organism>
    <name type="scientific">Bovine respiratory syncytial virus (strain Copenhagen)</name>
    <name type="common">BRS</name>
    <dbReference type="NCBI Taxonomy" id="11248"/>
    <lineage>
        <taxon>Viruses</taxon>
        <taxon>Riboviria</taxon>
        <taxon>Orthornavirae</taxon>
        <taxon>Negarnaviricota</taxon>
        <taxon>Haploviricotina</taxon>
        <taxon>Monjiviricetes</taxon>
        <taxon>Mononegavirales</taxon>
        <taxon>Pneumoviridae</taxon>
        <taxon>Orthopneumovirus</taxon>
        <taxon>Orthopneumovirus bovis</taxon>
    </lineage>
</organism>
<keyword id="KW-0002">3D-structure</keyword>
<keyword id="KW-0165">Cleavage on pair of basic residues</keyword>
<keyword id="KW-0175">Coiled coil</keyword>
<keyword id="KW-1015">Disulfide bond</keyword>
<keyword id="KW-1169">Fusion of virus membrane with host cell membrane</keyword>
<keyword id="KW-1168">Fusion of virus membrane with host membrane</keyword>
<keyword id="KW-0325">Glycoprotein</keyword>
<keyword id="KW-1032">Host cell membrane</keyword>
<keyword id="KW-1040">Host Golgi apparatus</keyword>
<keyword id="KW-1043">Host membrane</keyword>
<keyword id="KW-0945">Host-virus interaction</keyword>
<keyword id="KW-0449">Lipoprotein</keyword>
<keyword id="KW-0472">Membrane</keyword>
<keyword id="KW-0564">Palmitate</keyword>
<keyword id="KW-0732">Signal</keyword>
<keyword id="KW-1180">Syncytium formation induced by viral infection</keyword>
<keyword id="KW-0812">Transmembrane</keyword>
<keyword id="KW-1133">Transmembrane helix</keyword>
<keyword id="KW-1161">Viral attachment to host cell</keyword>
<keyword id="KW-1234">Viral attachment to host entry receptor</keyword>
<keyword id="KW-0261">Viral envelope protein</keyword>
<keyword id="KW-1162">Viral penetration into host cytoplasm</keyword>
<keyword id="KW-0946">Virion</keyword>
<keyword id="KW-1160">Virus entry into host cell</keyword>
<comment type="function">
    <molecule>Fusion glycoprotein F0</molecule>
    <text evidence="1">Inactive precursor that is cleaved at two sites by a furin-like protease to give rise to the mature F1 and F2 fusion glycoproteins.</text>
</comment>
<comment type="function">
    <molecule>Fusion glycoprotein F1</molecule>
    <text evidence="1">Class I viral fusion protein. Under the current model, the protein has at least 3 conformational states: pre-fusion native state, pre-hairpin intermediate state, and post-fusion hairpin state. During viral and plasma cell membrane fusion, the coiled coil regions assume a trimer-of-hairpins structure, positioning the fusion peptide in close proximity to the C-terminal region of the ectodomain. The formation of this structure appears to drive apposition and subsequent fusion of viral and cellular membranes leading to delivery of the nucleocapsid into the cytoplasm. This fusion is pH independent and occurs at the plasma or endosomal membrane. The trimer of F1-F2 (F protein) also facilitates the attachment and entry into the host cell. Later in infection, F protein expressed at the plasma membrane of infected cells can mediate fusion with adjacent cells to form syncytia, a cytopathic effect that could lead to tissue necrosis.</text>
</comment>
<comment type="function">
    <molecule>Fusion glycoprotein F2</molecule>
    <text evidence="1">Major determinant of the species specificity of RSV infection. The trimer of F1-F2 (F protein) also facilitates the attachment and entry into the host cell. Later in infection, F protein expressed at the plasma membrane of infected cells can mediate fusion with adjacent cells to form syncytia, a cytopathic effect that could lead to tissue necrosis.</text>
</comment>
<comment type="subunit">
    <molecule>Fusion glycoprotein F1</molecule>
    <text evidence="1">Homotrimer. Heterodimer with fusion protein F2; disulfide-linked. Part of a complex composed of F1, F2 and G glycoproteins. As a heterodimer with F2, interacts with host RHOA; this interaction facilitates virus-induced syncytium formation.</text>
</comment>
<comment type="subunit">
    <molecule>Fusion glycoprotein F2</molecule>
    <text evidence="1">Homotrimer. Heterodimer with fusion protein F1; disulfide-linked. Part of a complex composed of F1, F2 and G glycoproteins. As a heterodimer with F1, interacts with host RHOA; this interaction facilitates virus-induced syncytium formation.</text>
</comment>
<comment type="subcellular location">
    <molecule>Fusion glycoprotein F0</molecule>
    <subcellularLocation>
        <location evidence="1">Host Golgi apparatus membrane</location>
        <topology evidence="1">Single-pass membrane protein</topology>
    </subcellularLocation>
</comment>
<comment type="subcellular location">
    <molecule>Fusion glycoprotein F1</molecule>
    <subcellularLocation>
        <location evidence="1">Virion membrane</location>
        <topology evidence="1">Single-pass type I membrane protein</topology>
    </subcellularLocation>
    <subcellularLocation>
        <location evidence="1">Host cell membrane</location>
        <topology evidence="1">Single-pass membrane protein</topology>
    </subcellularLocation>
    <text evidence="1">Localized at the host apical membrane.</text>
</comment>
<comment type="subcellular location">
    <molecule>Fusion glycoprotein F2</molecule>
    <subcellularLocation>
        <location evidence="1">Virion membrane</location>
    </subcellularLocation>
    <subcellularLocation>
        <location evidence="1">Host cell membrane</location>
    </subcellularLocation>
    <text evidence="1">Localized at the host apical membrane.</text>
</comment>
<comment type="domain">
    <molecule>Fusion glycoprotein F0</molecule>
    <text evidence="1 2">The N-terminus is a hydrophobic fusion peptide that inserts into the target host membrane (By similarity). It is buried in the center of the trimer cavity before cleavage by host furin. The coiled coil (heptad repeat) regions are probably involved in homotrimerization, heterodimerization and in the formation of a fusion-active hairpin structure (By similarity).</text>
</comment>
<comment type="domain">
    <molecule>Fusion glycoprotein F1</molecule>
    <text evidence="1 2">The N-terminus is a hydrophobic fusion peptide that inserts into the target host membrane (By similarity). It is buried in the center of the trimer cavity before cleavage by host furin. The coiled coil (heptad repeat) regions are probably involved in homotrimerization, heterodimerization and in the formation of a fusion-active hairpin structure (By similarity).</text>
</comment>
<comment type="PTM">
    <molecule>Fusion glycoprotein F0</molecule>
    <text evidence="1">The F glycoprotein is synthesized as a F0 inactive precursor that is heavily N-glycosylated and processed at two sites by a host furin-like protease probably in the Golgi. The cleavage site between p27 and F1 may occur after endocytosis to yield the mature F1 and F2 proteins. Both cleavages are required for membrane fusion and p27 is released from the processed protein.</text>
</comment>
<comment type="similarity">
    <text evidence="4">Belongs to the paramyxoviruses fusion glycoprotein family.</text>
</comment>
<name>FUS_BRSVC</name>
<accession>P22167</accession>
<dbReference type="EMBL" id="M58350">
    <property type="protein sequence ID" value="AAA42808.1"/>
    <property type="molecule type" value="mRNA"/>
</dbReference>
<dbReference type="PIR" id="A38492">
    <property type="entry name" value="VGNZBR"/>
</dbReference>
<dbReference type="PDB" id="5TDL">
    <property type="method" value="X-ray"/>
    <property type="resolution" value="3.50 A"/>
    <property type="chains" value="A=1-513"/>
</dbReference>
<dbReference type="PDBsum" id="5TDL"/>
<dbReference type="SMR" id="P22167"/>
<dbReference type="GlyCosmos" id="P22167">
    <property type="glycosylation" value="3 sites, No reported glycans"/>
</dbReference>
<dbReference type="GO" id="GO:0044178">
    <property type="term" value="C:host cell Golgi membrane"/>
    <property type="evidence" value="ECO:0007669"/>
    <property type="project" value="UniProtKB-SubCell"/>
</dbReference>
<dbReference type="GO" id="GO:0020002">
    <property type="term" value="C:host cell plasma membrane"/>
    <property type="evidence" value="ECO:0007669"/>
    <property type="project" value="UniProtKB-SubCell"/>
</dbReference>
<dbReference type="GO" id="GO:0016020">
    <property type="term" value="C:membrane"/>
    <property type="evidence" value="ECO:0007669"/>
    <property type="project" value="UniProtKB-KW"/>
</dbReference>
<dbReference type="GO" id="GO:0019031">
    <property type="term" value="C:viral envelope"/>
    <property type="evidence" value="ECO:0007669"/>
    <property type="project" value="UniProtKB-KW"/>
</dbReference>
<dbReference type="GO" id="GO:0055036">
    <property type="term" value="C:virion membrane"/>
    <property type="evidence" value="ECO:0007669"/>
    <property type="project" value="UniProtKB-SubCell"/>
</dbReference>
<dbReference type="GO" id="GO:0098670">
    <property type="term" value="P:entry receptor-mediated virion attachment to host cell"/>
    <property type="evidence" value="ECO:0007669"/>
    <property type="project" value="UniProtKB-KW"/>
</dbReference>
<dbReference type="GO" id="GO:0019064">
    <property type="term" value="P:fusion of virus membrane with host plasma membrane"/>
    <property type="evidence" value="ECO:0007669"/>
    <property type="project" value="UniProtKB-KW"/>
</dbReference>
<dbReference type="GO" id="GO:0046718">
    <property type="term" value="P:symbiont entry into host cell"/>
    <property type="evidence" value="ECO:0007669"/>
    <property type="project" value="UniProtKB-KW"/>
</dbReference>
<dbReference type="GO" id="GO:0060141">
    <property type="term" value="P:symbiont-mediated induction of syncytium formation"/>
    <property type="evidence" value="ECO:0007669"/>
    <property type="project" value="UniProtKB-KW"/>
</dbReference>
<dbReference type="FunFam" id="1.10.287.2480:FF:000001">
    <property type="entry name" value="Fusion glycoprotein F0"/>
    <property type="match status" value="1"/>
</dbReference>
<dbReference type="Gene3D" id="1.10.287.2480">
    <property type="match status" value="2"/>
</dbReference>
<dbReference type="Gene3D" id="6.10.250.1160">
    <property type="match status" value="1"/>
</dbReference>
<dbReference type="Gene3D" id="6.20.370.50">
    <property type="match status" value="1"/>
</dbReference>
<dbReference type="InterPro" id="IPR000776">
    <property type="entry name" value="Fusion_F0_Paramyxovir"/>
</dbReference>
<dbReference type="Pfam" id="PF00523">
    <property type="entry name" value="Fusion_gly"/>
    <property type="match status" value="1"/>
</dbReference>
<dbReference type="SUPFAM" id="SSF58069">
    <property type="entry name" value="Virus ectodomain"/>
    <property type="match status" value="2"/>
</dbReference>
<organismHost>
    <name type="scientific">Bos taurus</name>
    <name type="common">Bovine</name>
    <dbReference type="NCBI Taxonomy" id="9913"/>
</organismHost>